<proteinExistence type="inferred from homology"/>
<sequence>MSLKQQVDLLPNKPGCYLFFNKDNDVIYVGKAKNLKKRVSTYFNKAYNIKTTRLVREITDLKYFIVDNEKESLLLEKNLIKKYHPKYNVLLNDDKTYPYIIITNQKDPMYKYVRKYDKKALKNYGPLPIGSNARSILLTLQRLFPLRMCQGNLNKPCLYYHLNQCSGACFKQVDPSYYEYQIKQVDKFFKGEINQVKQTLVKQMQKASDNLQFEQAQRIKDQITSLDFITAKQNVDIVTNKNIDVVNYEINQDKICFVILFYRLGQLTYKDEYIQNYEGQNLSELFNSYLQQIYQKNIYPDVLLIPNEIELLDLDQNLLEFSSYSLNKQDDVFIKLAKQNAIDSLNKSVISHNVNSGDEIEILEQLKQISNASKYLKRIEVFDISNIYSQFITGACIVYINAKPIRNEFRKYNIDPSYTSDFSRMKFMLEKRFLKQIKEKEQLPDLVIVDGGIIQIHAAKEVLNKLNLKIDVIGLSKDDHHKTRYLIDIFEQTIDIKNFKKLYNFLTSLQIRVDEYAKSGFRKKYHNQLNDQILLIKGVGKKTNLKLYKHFKTIDNIKNASFDELNKVINNKKITNLIISNLNK</sequence>
<reference key="1">
    <citation type="journal article" date="2004" name="Genome Res.">
        <title>The genome sequence of Mycoplasma mycoides subsp. mycoides SC type strain PG1T, the causative agent of contagious bovine pleuropneumonia (CBPP).</title>
        <authorList>
            <person name="Westberg J."/>
            <person name="Persson A."/>
            <person name="Holmberg A."/>
            <person name="Goesmann A."/>
            <person name="Lundeberg J."/>
            <person name="Johansson K.-E."/>
            <person name="Pettersson B."/>
            <person name="Uhlen M."/>
        </authorList>
    </citation>
    <scope>NUCLEOTIDE SEQUENCE [LARGE SCALE GENOMIC DNA]</scope>
    <source>
        <strain>CCUG 32753 / NCTC 10114 / PG1</strain>
    </source>
</reference>
<dbReference type="EMBL" id="BX293980">
    <property type="protein sequence ID" value="CAE76938.1"/>
    <property type="molecule type" value="Genomic_DNA"/>
</dbReference>
<dbReference type="RefSeq" id="NP_975296.1">
    <property type="nucleotide sequence ID" value="NC_005364.2"/>
</dbReference>
<dbReference type="RefSeq" id="WP_011166494.1">
    <property type="nucleotide sequence ID" value="NC_005364.2"/>
</dbReference>
<dbReference type="SMR" id="Q6MTU8"/>
<dbReference type="STRING" id="272632.MSC_0297"/>
<dbReference type="KEGG" id="mmy:MSC_0297"/>
<dbReference type="PATRIC" id="fig|272632.4.peg.317"/>
<dbReference type="eggNOG" id="COG0322">
    <property type="taxonomic scope" value="Bacteria"/>
</dbReference>
<dbReference type="HOGENOM" id="CLU_014841_3_2_14"/>
<dbReference type="Proteomes" id="UP000001016">
    <property type="component" value="Chromosome"/>
</dbReference>
<dbReference type="GO" id="GO:0005737">
    <property type="term" value="C:cytoplasm"/>
    <property type="evidence" value="ECO:0007669"/>
    <property type="project" value="UniProtKB-SubCell"/>
</dbReference>
<dbReference type="GO" id="GO:0009380">
    <property type="term" value="C:excinuclease repair complex"/>
    <property type="evidence" value="ECO:0007669"/>
    <property type="project" value="InterPro"/>
</dbReference>
<dbReference type="GO" id="GO:0003677">
    <property type="term" value="F:DNA binding"/>
    <property type="evidence" value="ECO:0007669"/>
    <property type="project" value="UniProtKB-UniRule"/>
</dbReference>
<dbReference type="GO" id="GO:0009381">
    <property type="term" value="F:excinuclease ABC activity"/>
    <property type="evidence" value="ECO:0007669"/>
    <property type="project" value="UniProtKB-UniRule"/>
</dbReference>
<dbReference type="GO" id="GO:0006289">
    <property type="term" value="P:nucleotide-excision repair"/>
    <property type="evidence" value="ECO:0007669"/>
    <property type="project" value="UniProtKB-UniRule"/>
</dbReference>
<dbReference type="GO" id="GO:0009432">
    <property type="term" value="P:SOS response"/>
    <property type="evidence" value="ECO:0007669"/>
    <property type="project" value="UniProtKB-UniRule"/>
</dbReference>
<dbReference type="CDD" id="cd10434">
    <property type="entry name" value="GIY-YIG_UvrC_Cho"/>
    <property type="match status" value="1"/>
</dbReference>
<dbReference type="FunFam" id="3.40.1440.10:FF:000001">
    <property type="entry name" value="UvrABC system protein C"/>
    <property type="match status" value="1"/>
</dbReference>
<dbReference type="Gene3D" id="1.10.150.20">
    <property type="entry name" value="5' to 3' exonuclease, C-terminal subdomain"/>
    <property type="match status" value="1"/>
</dbReference>
<dbReference type="Gene3D" id="3.40.1440.10">
    <property type="entry name" value="GIY-YIG endonuclease"/>
    <property type="match status" value="1"/>
</dbReference>
<dbReference type="Gene3D" id="4.10.860.10">
    <property type="entry name" value="UVR domain"/>
    <property type="match status" value="1"/>
</dbReference>
<dbReference type="Gene3D" id="3.30.420.340">
    <property type="entry name" value="UvrC, RNAse H endonuclease domain"/>
    <property type="match status" value="1"/>
</dbReference>
<dbReference type="HAMAP" id="MF_00203">
    <property type="entry name" value="UvrC"/>
    <property type="match status" value="1"/>
</dbReference>
<dbReference type="InterPro" id="IPR000305">
    <property type="entry name" value="GIY-YIG_endonuc"/>
</dbReference>
<dbReference type="InterPro" id="IPR035901">
    <property type="entry name" value="GIY-YIG_endonuc_sf"/>
</dbReference>
<dbReference type="InterPro" id="IPR047296">
    <property type="entry name" value="GIY-YIG_UvrC_Cho"/>
</dbReference>
<dbReference type="InterPro" id="IPR010994">
    <property type="entry name" value="RuvA_2-like"/>
</dbReference>
<dbReference type="InterPro" id="IPR001943">
    <property type="entry name" value="UVR_dom"/>
</dbReference>
<dbReference type="InterPro" id="IPR036876">
    <property type="entry name" value="UVR_dom_sf"/>
</dbReference>
<dbReference type="InterPro" id="IPR050066">
    <property type="entry name" value="UvrABC_protein_C"/>
</dbReference>
<dbReference type="InterPro" id="IPR004791">
    <property type="entry name" value="UvrC"/>
</dbReference>
<dbReference type="InterPro" id="IPR001162">
    <property type="entry name" value="UvrC_RNase_H_dom"/>
</dbReference>
<dbReference type="InterPro" id="IPR038476">
    <property type="entry name" value="UvrC_RNase_H_dom_sf"/>
</dbReference>
<dbReference type="NCBIfam" id="TIGR00194">
    <property type="entry name" value="uvrC"/>
    <property type="match status" value="1"/>
</dbReference>
<dbReference type="PANTHER" id="PTHR30562:SF1">
    <property type="entry name" value="UVRABC SYSTEM PROTEIN C"/>
    <property type="match status" value="1"/>
</dbReference>
<dbReference type="PANTHER" id="PTHR30562">
    <property type="entry name" value="UVRC/OXIDOREDUCTASE"/>
    <property type="match status" value="1"/>
</dbReference>
<dbReference type="Pfam" id="PF01541">
    <property type="entry name" value="GIY-YIG"/>
    <property type="match status" value="1"/>
</dbReference>
<dbReference type="Pfam" id="PF02151">
    <property type="entry name" value="UVR"/>
    <property type="match status" value="1"/>
</dbReference>
<dbReference type="Pfam" id="PF22920">
    <property type="entry name" value="UvrC_RNaseH"/>
    <property type="match status" value="1"/>
</dbReference>
<dbReference type="Pfam" id="PF08459">
    <property type="entry name" value="UvrC_RNaseH_dom"/>
    <property type="match status" value="1"/>
</dbReference>
<dbReference type="SMART" id="SM00465">
    <property type="entry name" value="GIYc"/>
    <property type="match status" value="1"/>
</dbReference>
<dbReference type="SUPFAM" id="SSF46600">
    <property type="entry name" value="C-terminal UvrC-binding domain of UvrB"/>
    <property type="match status" value="1"/>
</dbReference>
<dbReference type="SUPFAM" id="SSF82771">
    <property type="entry name" value="GIY-YIG endonuclease"/>
    <property type="match status" value="1"/>
</dbReference>
<dbReference type="SUPFAM" id="SSF47781">
    <property type="entry name" value="RuvA domain 2-like"/>
    <property type="match status" value="1"/>
</dbReference>
<dbReference type="PROSITE" id="PS50164">
    <property type="entry name" value="GIY_YIG"/>
    <property type="match status" value="1"/>
</dbReference>
<dbReference type="PROSITE" id="PS50151">
    <property type="entry name" value="UVR"/>
    <property type="match status" value="1"/>
</dbReference>
<dbReference type="PROSITE" id="PS50165">
    <property type="entry name" value="UVRC"/>
    <property type="match status" value="1"/>
</dbReference>
<keyword id="KW-0963">Cytoplasm</keyword>
<keyword id="KW-0227">DNA damage</keyword>
<keyword id="KW-0228">DNA excision</keyword>
<keyword id="KW-0234">DNA repair</keyword>
<keyword id="KW-0267">Excision nuclease</keyword>
<keyword id="KW-1185">Reference proteome</keyword>
<keyword id="KW-0742">SOS response</keyword>
<accession>Q6MTU8</accession>
<organism>
    <name type="scientific">Mycoplasma mycoides subsp. mycoides SC (strain CCUG 32753 / NCTC 10114 / PG1)</name>
    <dbReference type="NCBI Taxonomy" id="272632"/>
    <lineage>
        <taxon>Bacteria</taxon>
        <taxon>Bacillati</taxon>
        <taxon>Mycoplasmatota</taxon>
        <taxon>Mollicutes</taxon>
        <taxon>Mycoplasmataceae</taxon>
        <taxon>Mycoplasma</taxon>
    </lineage>
</organism>
<evidence type="ECO:0000255" key="1">
    <source>
        <dbReference type="HAMAP-Rule" id="MF_00203"/>
    </source>
</evidence>
<comment type="function">
    <text evidence="1">The UvrABC repair system catalyzes the recognition and processing of DNA lesions. UvrC both incises the 5' and 3' sides of the lesion. The N-terminal half is responsible for the 3' incision and the C-terminal half is responsible for the 5' incision.</text>
</comment>
<comment type="subunit">
    <text evidence="1">Interacts with UvrB in an incision complex.</text>
</comment>
<comment type="subcellular location">
    <subcellularLocation>
        <location evidence="1">Cytoplasm</location>
    </subcellularLocation>
</comment>
<comment type="similarity">
    <text evidence="1">Belongs to the UvrC family.</text>
</comment>
<gene>
    <name evidence="1" type="primary">uvrC</name>
    <name type="ordered locus">MSC_0297</name>
</gene>
<name>UVRC_MYCMS</name>
<protein>
    <recommendedName>
        <fullName evidence="1">UvrABC system protein C</fullName>
        <shortName evidence="1">Protein UvrC</shortName>
    </recommendedName>
    <alternativeName>
        <fullName evidence="1">Excinuclease ABC subunit C</fullName>
    </alternativeName>
</protein>
<feature type="chain" id="PRO_0000227447" description="UvrABC system protein C">
    <location>
        <begin position="1"/>
        <end position="584"/>
    </location>
</feature>
<feature type="domain" description="GIY-YIG" evidence="1">
    <location>
        <begin position="12"/>
        <end position="89"/>
    </location>
</feature>
<feature type="domain" description="UVR" evidence="1">
    <location>
        <begin position="194"/>
        <end position="229"/>
    </location>
</feature>